<organism>
    <name type="scientific">Yersinia pestis (strain Pestoides F)</name>
    <dbReference type="NCBI Taxonomy" id="386656"/>
    <lineage>
        <taxon>Bacteria</taxon>
        <taxon>Pseudomonadati</taxon>
        <taxon>Pseudomonadota</taxon>
        <taxon>Gammaproteobacteria</taxon>
        <taxon>Enterobacterales</taxon>
        <taxon>Yersiniaceae</taxon>
        <taxon>Yersinia</taxon>
    </lineage>
</organism>
<feature type="chain" id="PRO_1000022254" description="Potassium-transporting ATPase potassium-binding subunit">
    <location>
        <begin position="1"/>
        <end position="562"/>
    </location>
</feature>
<feature type="transmembrane region" description="Helical" evidence="1">
    <location>
        <begin position="6"/>
        <end position="26"/>
    </location>
</feature>
<feature type="transmembrane region" description="Helical" evidence="1">
    <location>
        <begin position="62"/>
        <end position="82"/>
    </location>
</feature>
<feature type="transmembrane region" description="Helical" evidence="1">
    <location>
        <begin position="132"/>
        <end position="152"/>
    </location>
</feature>
<feature type="transmembrane region" description="Helical" evidence="1">
    <location>
        <begin position="175"/>
        <end position="195"/>
    </location>
</feature>
<feature type="transmembrane region" description="Helical" evidence="1">
    <location>
        <begin position="253"/>
        <end position="273"/>
    </location>
</feature>
<feature type="transmembrane region" description="Helical" evidence="1">
    <location>
        <begin position="283"/>
        <end position="303"/>
    </location>
</feature>
<feature type="transmembrane region" description="Helical" evidence="1">
    <location>
        <begin position="327"/>
        <end position="347"/>
    </location>
</feature>
<feature type="transmembrane region" description="Helical" evidence="1">
    <location>
        <begin position="356"/>
        <end position="376"/>
    </location>
</feature>
<feature type="transmembrane region" description="Helical" evidence="1">
    <location>
        <begin position="379"/>
        <end position="399"/>
    </location>
</feature>
<feature type="transmembrane region" description="Helical" evidence="1">
    <location>
        <begin position="416"/>
        <end position="436"/>
    </location>
</feature>
<feature type="transmembrane region" description="Helical" evidence="1">
    <location>
        <begin position="483"/>
        <end position="503"/>
    </location>
</feature>
<feature type="transmembrane region" description="Helical" evidence="1">
    <location>
        <begin position="524"/>
        <end position="544"/>
    </location>
</feature>
<proteinExistence type="inferred from homology"/>
<dbReference type="EMBL" id="CP000668">
    <property type="protein sequence ID" value="ABP39967.1"/>
    <property type="molecule type" value="Genomic_DNA"/>
</dbReference>
<dbReference type="RefSeq" id="WP_002209652.1">
    <property type="nucleotide sequence ID" value="NZ_CP009715.1"/>
</dbReference>
<dbReference type="SMR" id="A4TL05"/>
<dbReference type="GeneID" id="57976001"/>
<dbReference type="KEGG" id="ypp:YPDSF_1580"/>
<dbReference type="PATRIC" id="fig|386656.14.peg.2189"/>
<dbReference type="GO" id="GO:0005886">
    <property type="term" value="C:plasma membrane"/>
    <property type="evidence" value="ECO:0007669"/>
    <property type="project" value="UniProtKB-SubCell"/>
</dbReference>
<dbReference type="GO" id="GO:0008556">
    <property type="term" value="F:P-type potassium transmembrane transporter activity"/>
    <property type="evidence" value="ECO:0007669"/>
    <property type="project" value="InterPro"/>
</dbReference>
<dbReference type="GO" id="GO:0030955">
    <property type="term" value="F:potassium ion binding"/>
    <property type="evidence" value="ECO:0007669"/>
    <property type="project" value="UniProtKB-UniRule"/>
</dbReference>
<dbReference type="HAMAP" id="MF_00275">
    <property type="entry name" value="KdpA"/>
    <property type="match status" value="1"/>
</dbReference>
<dbReference type="InterPro" id="IPR004623">
    <property type="entry name" value="KdpA"/>
</dbReference>
<dbReference type="NCBIfam" id="TIGR00680">
    <property type="entry name" value="kdpA"/>
    <property type="match status" value="1"/>
</dbReference>
<dbReference type="PANTHER" id="PTHR30607">
    <property type="entry name" value="POTASSIUM-TRANSPORTING ATPASE A CHAIN"/>
    <property type="match status" value="1"/>
</dbReference>
<dbReference type="PANTHER" id="PTHR30607:SF2">
    <property type="entry name" value="POTASSIUM-TRANSPORTING ATPASE POTASSIUM-BINDING SUBUNIT"/>
    <property type="match status" value="1"/>
</dbReference>
<dbReference type="Pfam" id="PF03814">
    <property type="entry name" value="KdpA"/>
    <property type="match status" value="1"/>
</dbReference>
<dbReference type="PIRSF" id="PIRSF001294">
    <property type="entry name" value="K_ATPaseA"/>
    <property type="match status" value="1"/>
</dbReference>
<gene>
    <name evidence="1" type="primary">kdpA</name>
    <name type="ordered locus">YPDSF_1580</name>
</gene>
<name>KDPA_YERPP</name>
<keyword id="KW-0997">Cell inner membrane</keyword>
<keyword id="KW-1003">Cell membrane</keyword>
<keyword id="KW-0406">Ion transport</keyword>
<keyword id="KW-0472">Membrane</keyword>
<keyword id="KW-0630">Potassium</keyword>
<keyword id="KW-0633">Potassium transport</keyword>
<keyword id="KW-0812">Transmembrane</keyword>
<keyword id="KW-1133">Transmembrane helix</keyword>
<keyword id="KW-0813">Transport</keyword>
<comment type="function">
    <text evidence="1">Part of the high-affinity ATP-driven potassium transport (or Kdp) system, which catalyzes the hydrolysis of ATP coupled with the electrogenic transport of potassium into the cytoplasm. This subunit binds the periplasmic potassium ions and delivers the ions to the membrane domain of KdpB through an intramembrane tunnel.</text>
</comment>
<comment type="subunit">
    <text evidence="1">The system is composed of three essential subunits: KdpA, KdpB and KdpC.</text>
</comment>
<comment type="subcellular location">
    <subcellularLocation>
        <location evidence="1">Cell inner membrane</location>
        <topology evidence="1">Multi-pass membrane protein</topology>
    </subcellularLocation>
</comment>
<comment type="similarity">
    <text evidence="1">Belongs to the KdpA family.</text>
</comment>
<reference key="1">
    <citation type="submission" date="2007-02" db="EMBL/GenBank/DDBJ databases">
        <title>Complete sequence of chromosome of Yersinia pestis Pestoides F.</title>
        <authorList>
            <consortium name="US DOE Joint Genome Institute"/>
            <person name="Copeland A."/>
            <person name="Lucas S."/>
            <person name="Lapidus A."/>
            <person name="Barry K."/>
            <person name="Detter J.C."/>
            <person name="Glavina del Rio T."/>
            <person name="Hammon N."/>
            <person name="Israni S."/>
            <person name="Dalin E."/>
            <person name="Tice H."/>
            <person name="Pitluck S."/>
            <person name="Di Bartolo G."/>
            <person name="Chain P."/>
            <person name="Malfatti S."/>
            <person name="Shin M."/>
            <person name="Vergez L."/>
            <person name="Schmutz J."/>
            <person name="Larimer F."/>
            <person name="Land M."/>
            <person name="Hauser L."/>
            <person name="Worsham P."/>
            <person name="Chu M."/>
            <person name="Bearden S."/>
            <person name="Garcia E."/>
            <person name="Richardson P."/>
        </authorList>
    </citation>
    <scope>NUCLEOTIDE SEQUENCE [LARGE SCALE GENOMIC DNA]</scope>
    <source>
        <strain>Pestoides F</strain>
    </source>
</reference>
<protein>
    <recommendedName>
        <fullName evidence="1">Potassium-transporting ATPase potassium-binding subunit</fullName>
    </recommendedName>
    <alternativeName>
        <fullName evidence="1">ATP phosphohydrolase [potassium-transporting] A chain</fullName>
    </alternativeName>
    <alternativeName>
        <fullName evidence="1">Potassium-binding and translocating subunit A</fullName>
    </alternativeName>
    <alternativeName>
        <fullName evidence="1">Potassium-translocating ATPase A chain</fullName>
    </alternativeName>
</protein>
<sequence length="562" mass="59249">MVASGFLLIASFMLVLFVLSRPLGGFLARLIEGEPFSALQKVEAGLWRCSGVKNAEMNGWQYALAILCFNLLGIVLLFVLLMTQGSLPLNPEHLPGMSWHLALNTAVSFVTNTNWQAYSGENTLSYLSQMAGLTVQNFLSAATGIAVAFALIRAFARHSATTLGNAWVDLVRITLYVLLPIALIIALIFVSQGVLQNLDDYLHITTLEGVQQTLPMGPVASQEAIKVLGTNGGGFFGANSAHPFENPTAFSNFVQMLAIFLIPCALCFAFGQVVGDNRQGHALIWAMSLIFIVAVVVVMYAELAGNPHLSPLGADSNSNMEGKESRFGILATSLYAVVTTAASCGAVNAMHDSFTALGGMIPLWLMQIGEVVFGGVGSGLYGMLLFVLLTVFIAGLMIGRTPEYLGKKIDVFDMKMTALAILVTPTIVLLGTALALCTEAGRAGILNPGAHGFSEVLYALSSAANNNGSAFAGLSVNTPFYNLLLAAAMFIGRFGVILPVLAIASSLVAKKRQPAGNGTLPTGGLLFIGLLIGTVLLVGALTFIPALALGPVAEHLQVWLAH</sequence>
<accession>A4TL05</accession>
<evidence type="ECO:0000255" key="1">
    <source>
        <dbReference type="HAMAP-Rule" id="MF_00275"/>
    </source>
</evidence>